<comment type="function">
    <text evidence="2">Involved in the regio- and stereoselective transformation of naphthalene to trans-1R-hydroxy-2R-glutathionyl-1,2-dihydronaphthalene in the presence of glutathione and glutathione S-transferases. It specifically catalyzes the production of a very reactive and potentially toxic intermediate, the 2R,2S arene oxide, that is associated with necrosis of the unciliated bronchiolar epithelial cells or club cells in lung.</text>
</comment>
<comment type="cofactor">
    <cofactor evidence="1">
        <name>heme</name>
        <dbReference type="ChEBI" id="CHEBI:30413"/>
    </cofactor>
</comment>
<comment type="subcellular location">
    <subcellularLocation>
        <location>Endoplasmic reticulum membrane</location>
        <topology>Peripheral membrane protein</topology>
    </subcellularLocation>
    <subcellularLocation>
        <location>Microsome membrane</location>
        <topology>Peripheral membrane protein</topology>
    </subcellularLocation>
</comment>
<comment type="similarity">
    <text evidence="3">Belongs to the cytochrome P450 family.</text>
</comment>
<evidence type="ECO:0000250" key="1"/>
<evidence type="ECO:0000269" key="2">
    <source>
    </source>
</evidence>
<evidence type="ECO:0000305" key="3"/>
<keyword id="KW-0256">Endoplasmic reticulum</keyword>
<keyword id="KW-0349">Heme</keyword>
<keyword id="KW-0408">Iron</keyword>
<keyword id="KW-0472">Membrane</keyword>
<keyword id="KW-0479">Metal-binding</keyword>
<keyword id="KW-0492">Microsome</keyword>
<keyword id="KW-0503">Monooxygenase</keyword>
<keyword id="KW-0560">Oxidoreductase</keyword>
<keyword id="KW-1185">Reference proteome</keyword>
<name>CP2F2_RAT</name>
<accession>O35293</accession>
<organism>
    <name type="scientific">Rattus norvegicus</name>
    <name type="common">Rat</name>
    <dbReference type="NCBI Taxonomy" id="10116"/>
    <lineage>
        <taxon>Eukaryota</taxon>
        <taxon>Metazoa</taxon>
        <taxon>Chordata</taxon>
        <taxon>Craniata</taxon>
        <taxon>Vertebrata</taxon>
        <taxon>Euteleostomi</taxon>
        <taxon>Mammalia</taxon>
        <taxon>Eutheria</taxon>
        <taxon>Euarchontoglires</taxon>
        <taxon>Glires</taxon>
        <taxon>Rodentia</taxon>
        <taxon>Myomorpha</taxon>
        <taxon>Muroidea</taxon>
        <taxon>Muridae</taxon>
        <taxon>Murinae</taxon>
        <taxon>Rattus</taxon>
    </lineage>
</organism>
<sequence length="491" mass="55946">MDGVSTAILLLLLAVISLSLTFTSWGKGQLPPGPKPLPILGNLLQLRSQDLLTSLTKLSKDYGSVFTVYLGPRRVIVLSGYQTVKEALVDKGEEFSGRGSYPIFFNFTKGNGIAFSDGERWKILRRFSVQILRNFGMGKRSIEERILEEGSFLLDVLRKTEGKPFDPVFILSRSVSNIICSVIFGSRFDYDDERLLTIIHFINDNFQIMSSPWGEMYNIFPSLLDWVPGPHRRVFRNFGGMKDLIARSVREHQDSLDPNSPRDFIDCFLTKMVQEKQDPLSHFNMDTLLMTTHNLLFGGTETVGTTLRHAFLILMKYPKVQARVQEEIDCVVGRSRMPTLEDRASMPYTDAVIHEVQRFADVIPMNLPHRVIRDTPFRGFLIPKGTDVITLLNTVHYDSDQFKTPQEFNPEHFLDANQSFKKSPAFMPFSAGRRLCLGEPLARMELFIYLTSILQNFTLHPLVEPEDIDLTPLSSGLGNLPRPFQLCMRIR</sequence>
<gene>
    <name type="primary">Cyp2f2</name>
    <name type="synonym">Cyp2f4</name>
</gene>
<proteinExistence type="evidence at transcript level"/>
<feature type="chain" id="PRO_0000051761" description="Cytochrome P450 2F2">
    <location>
        <begin position="1"/>
        <end position="491"/>
    </location>
</feature>
<feature type="binding site" description="axial binding residue" evidence="1">
    <location>
        <position position="436"/>
    </location>
    <ligand>
        <name>heme</name>
        <dbReference type="ChEBI" id="CHEBI:30413"/>
    </ligand>
    <ligandPart>
        <name>Fe</name>
        <dbReference type="ChEBI" id="CHEBI:18248"/>
    </ligandPart>
</feature>
<dbReference type="EC" id="1.14.14.-"/>
<dbReference type="EMBL" id="AF017393">
    <property type="protein sequence ID" value="AAB70259.1"/>
    <property type="molecule type" value="mRNA"/>
</dbReference>
<dbReference type="EMBL" id="BC070939">
    <property type="protein sequence ID" value="AAH70939.1"/>
    <property type="molecule type" value="mRNA"/>
</dbReference>
<dbReference type="RefSeq" id="NP_062176.1">
    <property type="nucleotide sequence ID" value="NM_019303.1"/>
</dbReference>
<dbReference type="RefSeq" id="XP_006228647.1">
    <property type="nucleotide sequence ID" value="XM_006228585.2"/>
</dbReference>
<dbReference type="SMR" id="O35293"/>
<dbReference type="FunCoup" id="O35293">
    <property type="interactions" value="108"/>
</dbReference>
<dbReference type="STRING" id="10116.ENSRNOP00000058858"/>
<dbReference type="PhosphoSitePlus" id="O35293"/>
<dbReference type="PaxDb" id="10116-ENSRNOP00000058858"/>
<dbReference type="Ensembl" id="ENSRNOT00000068690.4">
    <property type="protein sequence ID" value="ENSRNOP00000058858.2"/>
    <property type="gene ID" value="ENSRNOG00000032805.5"/>
</dbReference>
<dbReference type="GeneID" id="54246"/>
<dbReference type="KEGG" id="rno:54246"/>
<dbReference type="UCSC" id="RGD:2476">
    <property type="organism name" value="rat"/>
</dbReference>
<dbReference type="AGR" id="RGD:2476"/>
<dbReference type="CTD" id="54246"/>
<dbReference type="RGD" id="2476">
    <property type="gene designation" value="Cyp2f4"/>
</dbReference>
<dbReference type="eggNOG" id="KOG0156">
    <property type="taxonomic scope" value="Eukaryota"/>
</dbReference>
<dbReference type="GeneTree" id="ENSGT00940000162522"/>
<dbReference type="HOGENOM" id="CLU_001570_22_0_1"/>
<dbReference type="InParanoid" id="O35293"/>
<dbReference type="OMA" id="YVNAFIA"/>
<dbReference type="OrthoDB" id="1055148at2759"/>
<dbReference type="PhylomeDB" id="O35293"/>
<dbReference type="Reactome" id="R-RNO-211935">
    <property type="pathway name" value="Fatty acids"/>
</dbReference>
<dbReference type="Reactome" id="R-RNO-211981">
    <property type="pathway name" value="Xenobiotics"/>
</dbReference>
<dbReference type="Reactome" id="R-RNO-211999">
    <property type="pathway name" value="CYP2E1 reactions"/>
</dbReference>
<dbReference type="PRO" id="PR:O35293"/>
<dbReference type="Proteomes" id="UP000002494">
    <property type="component" value="Chromosome 1"/>
</dbReference>
<dbReference type="Bgee" id="ENSRNOG00000032805">
    <property type="expression patterns" value="Expressed in esophagus and 14 other cell types or tissues"/>
</dbReference>
<dbReference type="GO" id="GO:0005737">
    <property type="term" value="C:cytoplasm"/>
    <property type="evidence" value="ECO:0000318"/>
    <property type="project" value="GO_Central"/>
</dbReference>
<dbReference type="GO" id="GO:0005789">
    <property type="term" value="C:endoplasmic reticulum membrane"/>
    <property type="evidence" value="ECO:0007669"/>
    <property type="project" value="UniProtKB-SubCell"/>
</dbReference>
<dbReference type="GO" id="GO:0043231">
    <property type="term" value="C:intracellular membrane-bounded organelle"/>
    <property type="evidence" value="ECO:0000266"/>
    <property type="project" value="RGD"/>
</dbReference>
<dbReference type="GO" id="GO:0008392">
    <property type="term" value="F:arachidonate epoxygenase activity"/>
    <property type="evidence" value="ECO:0000318"/>
    <property type="project" value="GO_Central"/>
</dbReference>
<dbReference type="GO" id="GO:0020037">
    <property type="term" value="F:heme binding"/>
    <property type="evidence" value="ECO:0000318"/>
    <property type="project" value="GO_Central"/>
</dbReference>
<dbReference type="GO" id="GO:0005506">
    <property type="term" value="F:iron ion binding"/>
    <property type="evidence" value="ECO:0007669"/>
    <property type="project" value="InterPro"/>
</dbReference>
<dbReference type="GO" id="GO:0004497">
    <property type="term" value="F:monooxygenase activity"/>
    <property type="evidence" value="ECO:0000314"/>
    <property type="project" value="RGD"/>
</dbReference>
<dbReference type="GO" id="GO:0016712">
    <property type="term" value="F:oxidoreductase activity, acting on paired donors, with incorporation or reduction of molecular oxygen, reduced flavin or flavoprotein as one donor, and incorporation of one atom of oxygen"/>
    <property type="evidence" value="ECO:0000266"/>
    <property type="project" value="RGD"/>
</dbReference>
<dbReference type="GO" id="GO:0019825">
    <property type="term" value="F:oxygen binding"/>
    <property type="evidence" value="ECO:0007669"/>
    <property type="project" value="InterPro"/>
</dbReference>
<dbReference type="GO" id="GO:0019373">
    <property type="term" value="P:epoxygenase P450 pathway"/>
    <property type="evidence" value="ECO:0000318"/>
    <property type="project" value="GO_Central"/>
</dbReference>
<dbReference type="GO" id="GO:1901170">
    <property type="term" value="P:naphthalene catabolic process"/>
    <property type="evidence" value="ECO:0000266"/>
    <property type="project" value="RGD"/>
</dbReference>
<dbReference type="GO" id="GO:0009636">
    <property type="term" value="P:response to toxic substance"/>
    <property type="evidence" value="ECO:0000266"/>
    <property type="project" value="RGD"/>
</dbReference>
<dbReference type="GO" id="GO:0018979">
    <property type="term" value="P:trichloroethylene metabolic process"/>
    <property type="evidence" value="ECO:0000314"/>
    <property type="project" value="RGD"/>
</dbReference>
<dbReference type="GO" id="GO:0006805">
    <property type="term" value="P:xenobiotic metabolic process"/>
    <property type="evidence" value="ECO:0000318"/>
    <property type="project" value="GO_Central"/>
</dbReference>
<dbReference type="CDD" id="cd20669">
    <property type="entry name" value="Cyp2F"/>
    <property type="match status" value="1"/>
</dbReference>
<dbReference type="FunFam" id="1.10.630.10:FF:000001">
    <property type="entry name" value="Cytochrome P450, family 2"/>
    <property type="match status" value="1"/>
</dbReference>
<dbReference type="Gene3D" id="1.10.630.10">
    <property type="entry name" value="Cytochrome P450"/>
    <property type="match status" value="1"/>
</dbReference>
<dbReference type="InterPro" id="IPR001128">
    <property type="entry name" value="Cyt_P450"/>
</dbReference>
<dbReference type="InterPro" id="IPR017972">
    <property type="entry name" value="Cyt_P450_CS"/>
</dbReference>
<dbReference type="InterPro" id="IPR020469">
    <property type="entry name" value="Cyt_P450_CYP2_fam"/>
</dbReference>
<dbReference type="InterPro" id="IPR002401">
    <property type="entry name" value="Cyt_P450_E_grp-I"/>
</dbReference>
<dbReference type="InterPro" id="IPR036396">
    <property type="entry name" value="Cyt_P450_sf"/>
</dbReference>
<dbReference type="InterPro" id="IPR050182">
    <property type="entry name" value="Cytochrome_P450_fam2"/>
</dbReference>
<dbReference type="PANTHER" id="PTHR24300:SF275">
    <property type="entry name" value="CYTOCHROME P450 2F1"/>
    <property type="match status" value="1"/>
</dbReference>
<dbReference type="PANTHER" id="PTHR24300">
    <property type="entry name" value="CYTOCHROME P450 508A4-RELATED"/>
    <property type="match status" value="1"/>
</dbReference>
<dbReference type="Pfam" id="PF00067">
    <property type="entry name" value="p450"/>
    <property type="match status" value="1"/>
</dbReference>
<dbReference type="PRINTS" id="PR00463">
    <property type="entry name" value="EP450I"/>
</dbReference>
<dbReference type="PRINTS" id="PR01957">
    <property type="entry name" value="EP450ICYP2F"/>
</dbReference>
<dbReference type="PRINTS" id="PR00385">
    <property type="entry name" value="P450"/>
</dbReference>
<dbReference type="SUPFAM" id="SSF48264">
    <property type="entry name" value="Cytochrome P450"/>
    <property type="match status" value="1"/>
</dbReference>
<dbReference type="PROSITE" id="PS00086">
    <property type="entry name" value="CYTOCHROME_P450"/>
    <property type="match status" value="1"/>
</dbReference>
<protein>
    <recommendedName>
        <fullName>Cytochrome P450 2F2</fullName>
        <ecNumber>1.14.14.-</ecNumber>
    </recommendedName>
    <alternativeName>
        <fullName>CYPIIF2</fullName>
    </alternativeName>
    <alternativeName>
        <fullName>Cytochrome P450-NAH-2</fullName>
    </alternativeName>
    <alternativeName>
        <fullName>Naphthalene dehydrogenase</fullName>
    </alternativeName>
    <alternativeName>
        <fullName>Naphthalene hydroxylase</fullName>
    </alternativeName>
</protein>
<reference key="1">
    <citation type="journal article" date="2005" name="J. Pharmacol. Exp. Ther.">
        <title>Bioactivation of the pulmonary toxicants naphthalene and 1-nitronaphthalene by rat CYP2F4.</title>
        <authorList>
            <person name="Baldwin R.M."/>
            <person name="Shultz M.A."/>
            <person name="Buckpitt A.R."/>
        </authorList>
    </citation>
    <scope>NUCLEOTIDE SEQUENCE [MRNA]</scope>
    <scope>FUNCTION</scope>
    <source>
        <strain>Sprague-Dawley</strain>
        <tissue>Lung</tissue>
    </source>
</reference>
<reference key="2">
    <citation type="journal article" date="2004" name="Genome Res.">
        <title>The status, quality, and expansion of the NIH full-length cDNA project: the Mammalian Gene Collection (MGC).</title>
        <authorList>
            <consortium name="The MGC Project Team"/>
        </authorList>
    </citation>
    <scope>NUCLEOTIDE SEQUENCE [LARGE SCALE MRNA]</scope>
    <source>
        <tissue>Lung</tissue>
    </source>
</reference>